<accession>P0C963</accession>
<dbReference type="SMR" id="P0C963"/>
<dbReference type="GO" id="GO:0005576">
    <property type="term" value="C:extracellular region"/>
    <property type="evidence" value="ECO:0000250"/>
    <property type="project" value="UniProtKB"/>
</dbReference>
<dbReference type="GO" id="GO:0016020">
    <property type="term" value="C:membrane"/>
    <property type="evidence" value="ECO:0007669"/>
    <property type="project" value="TreeGrafter"/>
</dbReference>
<dbReference type="GO" id="GO:0042742">
    <property type="term" value="P:defense response to bacterium"/>
    <property type="evidence" value="ECO:0007669"/>
    <property type="project" value="UniProtKB-KW"/>
</dbReference>
<dbReference type="GO" id="GO:0042832">
    <property type="term" value="P:defense response to protozoan"/>
    <property type="evidence" value="ECO:0000250"/>
    <property type="project" value="UniProtKB"/>
</dbReference>
<dbReference type="GO" id="GO:0045087">
    <property type="term" value="P:innate immune response"/>
    <property type="evidence" value="ECO:0007669"/>
    <property type="project" value="UniProtKB-KW"/>
</dbReference>
<dbReference type="CDD" id="cd08544">
    <property type="entry name" value="Reeler"/>
    <property type="match status" value="1"/>
</dbReference>
<dbReference type="FunFam" id="2.60.40.4060:FF:000003">
    <property type="entry name" value="Ferric chelate reductase 1"/>
    <property type="match status" value="1"/>
</dbReference>
<dbReference type="Gene3D" id="2.60.40.4060">
    <property type="entry name" value="Reeler domain"/>
    <property type="match status" value="1"/>
</dbReference>
<dbReference type="InterPro" id="IPR051237">
    <property type="entry name" value="Ferric-chelate_Red/DefProt"/>
</dbReference>
<dbReference type="InterPro" id="IPR002861">
    <property type="entry name" value="Reeler_dom"/>
</dbReference>
<dbReference type="InterPro" id="IPR042307">
    <property type="entry name" value="Reeler_sf"/>
</dbReference>
<dbReference type="PANTHER" id="PTHR45828:SF9">
    <property type="entry name" value="CELL WALL INTEGRITY AND STRESS RESPONSE COMPONENT 4-LIKE-RELATED"/>
    <property type="match status" value="1"/>
</dbReference>
<dbReference type="PANTHER" id="PTHR45828">
    <property type="entry name" value="CYTOCHROME B561/FERRIC REDUCTASE TRANSMEMBRANE"/>
    <property type="match status" value="1"/>
</dbReference>
<dbReference type="Pfam" id="PF02014">
    <property type="entry name" value="Reeler"/>
    <property type="match status" value="1"/>
</dbReference>
<dbReference type="PROSITE" id="PS51019">
    <property type="entry name" value="REELIN"/>
    <property type="match status" value="1"/>
</dbReference>
<evidence type="ECO:0000250" key="1"/>
<evidence type="ECO:0000255" key="2"/>
<evidence type="ECO:0000255" key="3">
    <source>
        <dbReference type="PROSITE-ProRule" id="PRU00363"/>
    </source>
</evidence>
<evidence type="ECO:0000305" key="4"/>
<organism>
    <name type="scientific">Antheraea mylitta</name>
    <name type="common">Tasar silkworm</name>
    <dbReference type="NCBI Taxonomy" id="34739"/>
    <lineage>
        <taxon>Eukaryota</taxon>
        <taxon>Metazoa</taxon>
        <taxon>Ecdysozoa</taxon>
        <taxon>Arthropoda</taxon>
        <taxon>Hexapoda</taxon>
        <taxon>Insecta</taxon>
        <taxon>Pterygota</taxon>
        <taxon>Neoptera</taxon>
        <taxon>Endopterygota</taxon>
        <taxon>Lepidoptera</taxon>
        <taxon>Glossata</taxon>
        <taxon>Ditrysia</taxon>
        <taxon>Bombycoidea</taxon>
        <taxon>Saturniidae</taxon>
        <taxon>Saturniinae</taxon>
        <taxon>Saturniini</taxon>
        <taxon>Antheraea</taxon>
    </lineage>
</organism>
<feature type="signal peptide" evidence="2">
    <location>
        <begin position="1" status="less than"/>
        <end position="11"/>
    </location>
</feature>
<feature type="chain" id="PRO_0000372767" description="Putative defense protein 2">
    <location>
        <begin position="12"/>
        <end position="161"/>
    </location>
</feature>
<feature type="domain" description="Reelin" evidence="3">
    <location>
        <begin position="12"/>
        <end position="161"/>
    </location>
</feature>
<feature type="glycosylation site" description="N-linked (GlcNAc...) asparagine" evidence="2">
    <location>
        <position position="91"/>
    </location>
</feature>
<feature type="disulfide bond" evidence="2">
    <location>
        <begin position="21"/>
        <end position="98"/>
    </location>
</feature>
<feature type="non-terminal residue">
    <location>
        <position position="1"/>
    </location>
</feature>
<sequence length="161" mass="17284">LSWSALALTSAYPTGAPTSACFDMIPGHFASPQSEPAPYIITTPVSAVKAGDSIEVTISGKTAKDTMRGILLEARQGDKIVGTWTVKPNDNFSQLLNCGEPGNAVTHKHHANSEDKQTVSYLWTASGHLEGDVVFKVTIVKDYHTFWVAVPSAPVKILSHH</sequence>
<proteinExistence type="evidence at transcript level"/>
<comment type="function">
    <text evidence="1">May have antimicrobial activity.</text>
</comment>
<comment type="subcellular location">
    <subcellularLocation>
        <location evidence="1">Secreted</location>
    </subcellularLocation>
</comment>
<comment type="similarity">
    <text evidence="4">Belongs to the insect defense protein family.</text>
</comment>
<name>DFP2_ANTMY</name>
<protein>
    <recommendedName>
        <fullName>Putative defense protein 2</fullName>
        <shortName>DFP-2</shortName>
    </recommendedName>
</protein>
<keyword id="KW-0044">Antibiotic</keyword>
<keyword id="KW-0929">Antimicrobial</keyword>
<keyword id="KW-1015">Disulfide bond</keyword>
<keyword id="KW-0325">Glycoprotein</keyword>
<keyword id="KW-0391">Immunity</keyword>
<keyword id="KW-0399">Innate immunity</keyword>
<keyword id="KW-0964">Secreted</keyword>
<keyword id="KW-0732">Signal</keyword>
<reference key="1">
    <citation type="journal article" date="2006" name="BMC Genomics">
        <title>Analysis of bacteria-challenged wild silkmoth, Antheraea mylitta (lepidoptera) transcriptome reveals potential immune genes.</title>
        <authorList>
            <person name="Gandhe A.S."/>
            <person name="Arunkumar K.P."/>
            <person name="John S.H."/>
            <person name="Nagaraju J."/>
        </authorList>
    </citation>
    <scope>NUCLEOTIDE SEQUENCE [MRNA]</scope>
    <source>
        <tissue>Fat body</tissue>
    </source>
</reference>